<comment type="function">
    <text evidence="1 2">Secreted ribonuclease that can either promote or restrict cell proliferation of target cells, depending on the context. Endocytosed in target cells via its receptor PLXNB2 and translocates to the cytoplasm or nucleus. Under stress conditions, localizes to the cytoplasm and promotes the assembly of stress granules (SGs): specifically cleaves a subset of tRNAs within anticodon loops to produce tRNA-derived stress-induced fragments (tiRNAs), resulting in translation repression and inhibition of cell proliferation (By similarity). tiRNas also prevent formation of apoptosome, thereby promoting cell survival (By similarity). Preferentially cleaves RNAs between a pyrimidine and an adenosine residue, suggesting that it cleaves the anticodon loop of tRNA(Ala) (32-UUAGCAU-38) after positions 33 and 36. Cleaves a subset of tRNAs, including tRNA(Ala), tRNA(Glu), tRNA(Gly), tRNA(Lys), tRNA(Val), tRNA(His), tRNA(Asp) and tRNA(Sec). Under growth conditions and in differentiated cells, translocates to the nucleus and stimulates ribosomal RNA (rRNA) transcription, including that containing the initiation site sequences of 45S rRNA, thereby promoting cell growth and proliferation. Angiogenin induces vascularization of normal and malignant tissues via its ability to promote rRNA transcription. Involved in hematopoietic stem and progenitor cell (HSPC) growth and survival by promoting rRNA transcription in growth conditions and inhibiting translation in response to stress, respectively. Mediates the crosstalk between myeloid and intestinal epithelial cells to protect the intestinal epithelial barrier integrity: secreted by myeloid cells and promotes intestinal epithelial cells proliferation and survival (By similarity). Also mediates osteoclast-endothelial cell crosstalk in growing bone: produced by osteoclasts and protects the neighboring vascular cells against senescence by promoting rRNA transcription (By similarity).</text>
</comment>
<comment type="activity regulation">
    <text evidence="1">Has weak tRNA ribonuclease activity by itself due to partial autoinhibition by its C-terminus, which folds into a short alpha-helix that partially occludes the substrate-binding site. In absence of stress, the ribonuclease activity is inhibited by RNH1 in the cytoplasm. In response to stress, dissociates from RNH1 in the cytoplasm and associates with cytoplasmic ribosomes with vacant A-sites: ribosomes directly activate the tRNA ribonuclease activity of ANG by refolding the C-terminal alpha-helix. In response to stress, the angiogenic activity of ANG is inhibited by RNH1 in the nucleus.</text>
</comment>
<comment type="subunit">
    <text evidence="1">Homodimer. Interacts with RNH1; inhibiting ANG ribonuclease activity. Interacts with PCNA.</text>
</comment>
<comment type="subcellular location">
    <subcellularLocation>
        <location evidence="1">Secreted</location>
    </subcellularLocation>
    <subcellularLocation>
        <location evidence="1">Nucleus</location>
    </subcellularLocation>
    <subcellularLocation>
        <location evidence="1">Nucleus</location>
        <location evidence="1">Nucleolus</location>
    </subcellularLocation>
    <subcellularLocation>
        <location evidence="1">Cytoplasm</location>
        <location evidence="1">Stress granule</location>
    </subcellularLocation>
    <text evidence="1">The secreted protein is rapidly endocytosed by target cells following interaction with PLXNB2 receptor and translocated to the cytoplasm and nucleus. In the nucleus, accumulates in the nucleolus and binds to DNA.</text>
</comment>
<comment type="similarity">
    <text evidence="3">Belongs to the pancreatic ribonuclease family.</text>
</comment>
<reference key="1">
    <citation type="journal article" date="2002" name="Mol. Biol. Evol.">
        <title>Diversifying selection of the tumor-growth promoter angiogenin in primate evolution.</title>
        <authorList>
            <person name="Zhang J."/>
            <person name="Rosenberg H.F."/>
        </authorList>
    </citation>
    <scope>NUCLEOTIDE SEQUENCE [GENOMIC DNA]</scope>
</reference>
<keyword id="KW-0037">Angiogenesis</keyword>
<keyword id="KW-0963">Cytoplasm</keyword>
<keyword id="KW-0217">Developmental protein</keyword>
<keyword id="KW-0221">Differentiation</keyword>
<keyword id="KW-1015">Disulfide bond</keyword>
<keyword id="KW-0238">DNA-binding</keyword>
<keyword id="KW-0255">Endonuclease</keyword>
<keyword id="KW-0378">Hydrolase</keyword>
<keyword id="KW-0540">Nuclease</keyword>
<keyword id="KW-0539">Nucleus</keyword>
<keyword id="KW-0652">Protein synthesis inhibitor</keyword>
<keyword id="KW-0873">Pyrrolidone carboxylic acid</keyword>
<keyword id="KW-1185">Reference proteome</keyword>
<keyword id="KW-0964">Secreted</keyword>
<keyword id="KW-0732">Signal</keyword>
<keyword id="KW-0346">Stress response</keyword>
<organism>
    <name type="scientific">Macaca mulatta</name>
    <name type="common">Rhesus macaque</name>
    <dbReference type="NCBI Taxonomy" id="9544"/>
    <lineage>
        <taxon>Eukaryota</taxon>
        <taxon>Metazoa</taxon>
        <taxon>Chordata</taxon>
        <taxon>Craniata</taxon>
        <taxon>Vertebrata</taxon>
        <taxon>Euteleostomi</taxon>
        <taxon>Mammalia</taxon>
        <taxon>Eutheria</taxon>
        <taxon>Euarchontoglires</taxon>
        <taxon>Primates</taxon>
        <taxon>Haplorrhini</taxon>
        <taxon>Catarrhini</taxon>
        <taxon>Cercopithecidae</taxon>
        <taxon>Cercopithecinae</taxon>
        <taxon>Macaca</taxon>
    </lineage>
</organism>
<accession>Q8WN63</accession>
<gene>
    <name type="primary">ANG</name>
    <name type="synonym">RNASE5</name>
</gene>
<sequence length="146" mass="16301">MVMGLGLFLLVFMLGLGLTPPTLAQDNPRYRDFLAKHYDATPQGRNDRYCESTMRRRHLTSPCKDINTFVHGNRHHITAICGDENGSPYGGNLRISTSPFQVTTCKLRGGSPRPPCQYRATRGSRNIVVGCENGLPVHLDESIFRP</sequence>
<dbReference type="EC" id="3.1.27.-" evidence="1"/>
<dbReference type="EMBL" id="AF441667">
    <property type="protein sequence ID" value="AAL61649.1"/>
    <property type="molecule type" value="Genomic_DNA"/>
</dbReference>
<dbReference type="SMR" id="Q8WN63"/>
<dbReference type="FunCoup" id="Q8WN63">
    <property type="interactions" value="154"/>
</dbReference>
<dbReference type="STRING" id="9544.ENSMMUP00000062606"/>
<dbReference type="InParanoid" id="Q8WN63"/>
<dbReference type="Proteomes" id="UP000006718">
    <property type="component" value="Unassembled WGS sequence"/>
</dbReference>
<dbReference type="GO" id="GO:0032311">
    <property type="term" value="C:angiogenin-PRI complex"/>
    <property type="evidence" value="ECO:0000250"/>
    <property type="project" value="UniProtKB"/>
</dbReference>
<dbReference type="GO" id="GO:0005604">
    <property type="term" value="C:basement membrane"/>
    <property type="evidence" value="ECO:0000250"/>
    <property type="project" value="UniProtKB"/>
</dbReference>
<dbReference type="GO" id="GO:0005737">
    <property type="term" value="C:cytoplasm"/>
    <property type="evidence" value="ECO:0000250"/>
    <property type="project" value="UniProtKB"/>
</dbReference>
<dbReference type="GO" id="GO:0010494">
    <property type="term" value="C:cytoplasmic stress granule"/>
    <property type="evidence" value="ECO:0007669"/>
    <property type="project" value="UniProtKB-SubCell"/>
</dbReference>
<dbReference type="GO" id="GO:0030139">
    <property type="term" value="C:endocytic vesicle"/>
    <property type="evidence" value="ECO:0000250"/>
    <property type="project" value="UniProtKB"/>
</dbReference>
<dbReference type="GO" id="GO:0005615">
    <property type="term" value="C:extracellular space"/>
    <property type="evidence" value="ECO:0000250"/>
    <property type="project" value="UniProtKB"/>
</dbReference>
<dbReference type="GO" id="GO:0005730">
    <property type="term" value="C:nucleolus"/>
    <property type="evidence" value="ECO:0000250"/>
    <property type="project" value="UniProtKB"/>
</dbReference>
<dbReference type="GO" id="GO:0005634">
    <property type="term" value="C:nucleus"/>
    <property type="evidence" value="ECO:0000250"/>
    <property type="project" value="UniProtKB"/>
</dbReference>
<dbReference type="GO" id="GO:0003779">
    <property type="term" value="F:actin binding"/>
    <property type="evidence" value="ECO:0000250"/>
    <property type="project" value="UniProtKB"/>
</dbReference>
<dbReference type="GO" id="GO:0005507">
    <property type="term" value="F:copper ion binding"/>
    <property type="evidence" value="ECO:0000250"/>
    <property type="project" value="UniProtKB"/>
</dbReference>
<dbReference type="GO" id="GO:0003677">
    <property type="term" value="F:DNA binding"/>
    <property type="evidence" value="ECO:0007669"/>
    <property type="project" value="UniProtKB-KW"/>
</dbReference>
<dbReference type="GO" id="GO:0004519">
    <property type="term" value="F:endonuclease activity"/>
    <property type="evidence" value="ECO:0007669"/>
    <property type="project" value="UniProtKB-KW"/>
</dbReference>
<dbReference type="GO" id="GO:0008201">
    <property type="term" value="F:heparin binding"/>
    <property type="evidence" value="ECO:0000250"/>
    <property type="project" value="UniProtKB"/>
</dbReference>
<dbReference type="GO" id="GO:0042803">
    <property type="term" value="F:protein homodimerization activity"/>
    <property type="evidence" value="ECO:0000250"/>
    <property type="project" value="UniProtKB"/>
</dbReference>
<dbReference type="GO" id="GO:0004540">
    <property type="term" value="F:RNA nuclease activity"/>
    <property type="evidence" value="ECO:0000250"/>
    <property type="project" value="UniProtKB"/>
</dbReference>
<dbReference type="GO" id="GO:0005102">
    <property type="term" value="F:signaling receptor binding"/>
    <property type="evidence" value="ECO:0000250"/>
    <property type="project" value="UniProtKB"/>
</dbReference>
<dbReference type="GO" id="GO:0004549">
    <property type="term" value="F:tRNA-specific ribonuclease activity"/>
    <property type="evidence" value="ECO:0000250"/>
    <property type="project" value="UniProtKB"/>
</dbReference>
<dbReference type="GO" id="GO:0030041">
    <property type="term" value="P:actin filament polymerization"/>
    <property type="evidence" value="ECO:0000250"/>
    <property type="project" value="UniProtKB"/>
</dbReference>
<dbReference type="GO" id="GO:0001525">
    <property type="term" value="P:angiogenesis"/>
    <property type="evidence" value="ECO:0000250"/>
    <property type="project" value="UniProtKB"/>
</dbReference>
<dbReference type="GO" id="GO:0019731">
    <property type="term" value="P:antibacterial humoral response"/>
    <property type="evidence" value="ECO:0000318"/>
    <property type="project" value="GO_Central"/>
</dbReference>
<dbReference type="GO" id="GO:0061844">
    <property type="term" value="P:antimicrobial humoral immune response mediated by antimicrobial peptide"/>
    <property type="evidence" value="ECO:0000318"/>
    <property type="project" value="GO_Central"/>
</dbReference>
<dbReference type="GO" id="GO:0050830">
    <property type="term" value="P:defense response to Gram-positive bacterium"/>
    <property type="evidence" value="ECO:0000318"/>
    <property type="project" value="GO_Central"/>
</dbReference>
<dbReference type="GO" id="GO:0071425">
    <property type="term" value="P:hematopoietic stem cell proliferation"/>
    <property type="evidence" value="ECO:0000250"/>
    <property type="project" value="UniProtKB"/>
</dbReference>
<dbReference type="GO" id="GO:0045087">
    <property type="term" value="P:innate immune response"/>
    <property type="evidence" value="ECO:0000318"/>
    <property type="project" value="GO_Central"/>
</dbReference>
<dbReference type="GO" id="GO:0043066">
    <property type="term" value="P:negative regulation of apoptotic process"/>
    <property type="evidence" value="ECO:0000250"/>
    <property type="project" value="UniProtKB"/>
</dbReference>
<dbReference type="GO" id="GO:0048662">
    <property type="term" value="P:negative regulation of smooth muscle cell proliferation"/>
    <property type="evidence" value="ECO:0000250"/>
    <property type="project" value="UniProtKB"/>
</dbReference>
<dbReference type="GO" id="GO:0032055">
    <property type="term" value="P:negative regulation of translation in response to stress"/>
    <property type="evidence" value="ECO:0000250"/>
    <property type="project" value="UniProtKB"/>
</dbReference>
<dbReference type="GO" id="GO:0001938">
    <property type="term" value="P:positive regulation of endothelial cell proliferation"/>
    <property type="evidence" value="ECO:0000250"/>
    <property type="project" value="UniProtKB"/>
</dbReference>
<dbReference type="GO" id="GO:0050714">
    <property type="term" value="P:positive regulation of protein secretion"/>
    <property type="evidence" value="ECO:0000250"/>
    <property type="project" value="UniProtKB"/>
</dbReference>
<dbReference type="GO" id="GO:0001666">
    <property type="term" value="P:response to hypoxia"/>
    <property type="evidence" value="ECO:0000250"/>
    <property type="project" value="UniProtKB"/>
</dbReference>
<dbReference type="GO" id="GO:0009303">
    <property type="term" value="P:rRNA transcription"/>
    <property type="evidence" value="ECO:0000250"/>
    <property type="project" value="UniProtKB"/>
</dbReference>
<dbReference type="GO" id="GO:0023052">
    <property type="term" value="P:signaling"/>
    <property type="evidence" value="ECO:0000250"/>
    <property type="project" value="UniProtKB"/>
</dbReference>
<dbReference type="GO" id="GO:0034063">
    <property type="term" value="P:stress granule assembly"/>
    <property type="evidence" value="ECO:0000250"/>
    <property type="project" value="UniProtKB"/>
</dbReference>
<dbReference type="CDD" id="cd06265">
    <property type="entry name" value="RNase_A_canonical"/>
    <property type="match status" value="1"/>
</dbReference>
<dbReference type="FunFam" id="3.10.130.10:FF:000001">
    <property type="entry name" value="Ribonuclease pancreatic"/>
    <property type="match status" value="1"/>
</dbReference>
<dbReference type="Gene3D" id="3.10.130.10">
    <property type="entry name" value="Ribonuclease A-like domain"/>
    <property type="match status" value="1"/>
</dbReference>
<dbReference type="InterPro" id="IPR001427">
    <property type="entry name" value="RNaseA"/>
</dbReference>
<dbReference type="InterPro" id="IPR036816">
    <property type="entry name" value="RNaseA-like_dom_sf"/>
</dbReference>
<dbReference type="InterPro" id="IPR023411">
    <property type="entry name" value="RNaseA_AS"/>
</dbReference>
<dbReference type="InterPro" id="IPR023412">
    <property type="entry name" value="RNaseA_domain"/>
</dbReference>
<dbReference type="PANTHER" id="PTHR11437:SF60">
    <property type="entry name" value="ANGIOGENIN"/>
    <property type="match status" value="1"/>
</dbReference>
<dbReference type="PANTHER" id="PTHR11437">
    <property type="entry name" value="RIBONUCLEASE"/>
    <property type="match status" value="1"/>
</dbReference>
<dbReference type="Pfam" id="PF00074">
    <property type="entry name" value="RnaseA"/>
    <property type="match status" value="1"/>
</dbReference>
<dbReference type="PRINTS" id="PR00794">
    <property type="entry name" value="RIBONUCLEASE"/>
</dbReference>
<dbReference type="SMART" id="SM00092">
    <property type="entry name" value="RNAse_Pc"/>
    <property type="match status" value="1"/>
</dbReference>
<dbReference type="SUPFAM" id="SSF54076">
    <property type="entry name" value="RNase A-like"/>
    <property type="match status" value="1"/>
</dbReference>
<dbReference type="PROSITE" id="PS00127">
    <property type="entry name" value="RNASE_PANCREATIC"/>
    <property type="match status" value="1"/>
</dbReference>
<feature type="signal peptide" evidence="1">
    <location>
        <begin position="1"/>
        <end position="24"/>
    </location>
</feature>
<feature type="chain" id="PRO_0000030844" description="Angiogenin">
    <location>
        <begin position="25"/>
        <end position="146"/>
    </location>
</feature>
<feature type="short sequence motif" description="Nucleolar localization signal" evidence="1">
    <location>
        <begin position="55"/>
        <end position="59"/>
    </location>
</feature>
<feature type="active site" description="Proton acceptor" evidence="1">
    <location>
        <position position="37"/>
    </location>
</feature>
<feature type="active site" description="Proton donor" evidence="1">
    <location>
        <position position="138"/>
    </location>
</feature>
<feature type="binding site" evidence="1">
    <location>
        <position position="45"/>
    </location>
    <ligand>
        <name>tRNA</name>
        <dbReference type="ChEBI" id="CHEBI:17843"/>
    </ligand>
</feature>
<feature type="binding site" evidence="1">
    <location>
        <position position="105"/>
    </location>
    <ligand>
        <name>tRNA</name>
        <dbReference type="ChEBI" id="CHEBI:17843"/>
    </ligand>
</feature>
<feature type="binding site" evidence="1">
    <location>
        <position position="127"/>
    </location>
    <ligand>
        <name>tRNA</name>
        <dbReference type="ChEBI" id="CHEBI:17843"/>
    </ligand>
</feature>
<feature type="modified residue" description="Pyrrolidone carboxylic acid" evidence="1">
    <location>
        <position position="25"/>
    </location>
</feature>
<feature type="disulfide bond" evidence="1">
    <location>
        <begin position="50"/>
        <end position="105"/>
    </location>
</feature>
<feature type="disulfide bond" evidence="1">
    <location>
        <begin position="63"/>
        <end position="116"/>
    </location>
</feature>
<feature type="disulfide bond" evidence="1">
    <location>
        <begin position="81"/>
        <end position="131"/>
    </location>
</feature>
<protein>
    <recommendedName>
        <fullName>Angiogenin</fullName>
        <ecNumber evidence="1">3.1.27.-</ecNumber>
    </recommendedName>
    <alternativeName>
        <fullName>Ribonuclease 5</fullName>
        <shortName>RNase 5</shortName>
    </alternativeName>
</protein>
<evidence type="ECO:0000250" key="1">
    <source>
        <dbReference type="UniProtKB" id="P03950"/>
    </source>
</evidence>
<evidence type="ECO:0000250" key="2">
    <source>
        <dbReference type="UniProtKB" id="P21570"/>
    </source>
</evidence>
<evidence type="ECO:0000305" key="3"/>
<name>ANGI_MACMU</name>
<proteinExistence type="inferred from homology"/>